<reference key="1">
    <citation type="journal article" date="1998" name="J. Bacteriol.">
        <title>Characterization of the genes encoding D-amino acid transaminase and glutamate racemase, two D-glutamate biosynthetic enzymes of Bacillus sphaericus ATCC 10208.</title>
        <authorList>
            <person name="Fotheringham I.G."/>
            <person name="Bledig S.A."/>
            <person name="Taylor P.P."/>
        </authorList>
    </citation>
    <scope>NUCLEOTIDE SEQUENCE [GENOMIC DNA]</scope>
    <source>
        <strain>ATCC 10208 / DSM 5019 / NBRC 3525 / NCIMB 11935 / NRS 966 / 1911</strain>
    </source>
</reference>
<accession>P52972</accession>
<evidence type="ECO:0000255" key="1">
    <source>
        <dbReference type="HAMAP-Rule" id="MF_00258"/>
    </source>
</evidence>
<gene>
    <name evidence="1" type="primary">murI</name>
    <name type="synonym">glr</name>
</gene>
<name>MURI_LYSSH</name>
<sequence>MNAPIGVIDSGVGGLTVAKEIIKRLPNETIYYIGDTARCPYGPRTRQEVRNFTWQMAKALEKMNIKMLVIACNTATAVALESLQRNMPFPVLGVINRGARAAVKKTKRHEVVVLATEGTIKSGAYEEALLSLNTSTHIIPLACPTFVPLVESGEYKGQFANNLIAEGLKPLKNEQFDTVILGCTHYPILQKQIEAVVGEDVFVLSSAEETAKDVEEMLAYNGTLADTNAKPAHKFYATGSVPIFRSIAENWLEQGTLDIHRITLK</sequence>
<comment type="function">
    <text evidence="1">Provides the (R)-glutamate required for cell wall biosynthesis.</text>
</comment>
<comment type="catalytic activity">
    <reaction evidence="1">
        <text>L-glutamate = D-glutamate</text>
        <dbReference type="Rhea" id="RHEA:12813"/>
        <dbReference type="ChEBI" id="CHEBI:29985"/>
        <dbReference type="ChEBI" id="CHEBI:29986"/>
        <dbReference type="EC" id="5.1.1.3"/>
    </reaction>
</comment>
<comment type="pathway">
    <text evidence="1">Cell wall biogenesis; peptidoglycan biosynthesis.</text>
</comment>
<comment type="similarity">
    <text evidence="1">Belongs to the aspartate/glutamate racemases family.</text>
</comment>
<organism>
    <name type="scientific">Lysinibacillus sphaericus</name>
    <name type="common">Bacillus sphaericus</name>
    <dbReference type="NCBI Taxonomy" id="1421"/>
    <lineage>
        <taxon>Bacteria</taxon>
        <taxon>Bacillati</taxon>
        <taxon>Bacillota</taxon>
        <taxon>Bacilli</taxon>
        <taxon>Bacillales</taxon>
        <taxon>Bacillaceae</taxon>
        <taxon>Lysinibacillus</taxon>
    </lineage>
</organism>
<feature type="chain" id="PRO_0000095452" description="Glutamate racemase">
    <location>
        <begin position="1"/>
        <end position="265"/>
    </location>
</feature>
<feature type="active site" description="Proton donor/acceptor" evidence="1">
    <location>
        <position position="72"/>
    </location>
</feature>
<feature type="active site" description="Proton donor/acceptor" evidence="1">
    <location>
        <position position="183"/>
    </location>
</feature>
<feature type="binding site" evidence="1">
    <location>
        <begin position="9"/>
        <end position="10"/>
    </location>
    <ligand>
        <name>substrate</name>
    </ligand>
</feature>
<feature type="binding site" evidence="1">
    <location>
        <begin position="41"/>
        <end position="42"/>
    </location>
    <ligand>
        <name>substrate</name>
    </ligand>
</feature>
<feature type="binding site" evidence="1">
    <location>
        <begin position="73"/>
        <end position="74"/>
    </location>
    <ligand>
        <name>substrate</name>
    </ligand>
</feature>
<feature type="binding site" evidence="1">
    <location>
        <begin position="184"/>
        <end position="185"/>
    </location>
    <ligand>
        <name>substrate</name>
    </ligand>
</feature>
<keyword id="KW-0133">Cell shape</keyword>
<keyword id="KW-0961">Cell wall biogenesis/degradation</keyword>
<keyword id="KW-0413">Isomerase</keyword>
<keyword id="KW-0573">Peptidoglycan synthesis</keyword>
<protein>
    <recommendedName>
        <fullName evidence="1">Glutamate racemase</fullName>
        <ecNumber evidence="1">5.1.1.3</ecNumber>
    </recommendedName>
</protein>
<proteinExistence type="inferred from homology"/>
<dbReference type="EC" id="5.1.1.3" evidence="1"/>
<dbReference type="EMBL" id="U26733">
    <property type="protein sequence ID" value="AAA68029.1"/>
    <property type="molecule type" value="Genomic_DNA"/>
</dbReference>
<dbReference type="SMR" id="P52972"/>
<dbReference type="STRING" id="1421.A2J09_12590"/>
<dbReference type="UniPathway" id="UPA00219"/>
<dbReference type="GO" id="GO:0008881">
    <property type="term" value="F:glutamate racemase activity"/>
    <property type="evidence" value="ECO:0007669"/>
    <property type="project" value="UniProtKB-UniRule"/>
</dbReference>
<dbReference type="GO" id="GO:0071555">
    <property type="term" value="P:cell wall organization"/>
    <property type="evidence" value="ECO:0007669"/>
    <property type="project" value="UniProtKB-KW"/>
</dbReference>
<dbReference type="GO" id="GO:0009252">
    <property type="term" value="P:peptidoglycan biosynthetic process"/>
    <property type="evidence" value="ECO:0007669"/>
    <property type="project" value="UniProtKB-UniRule"/>
</dbReference>
<dbReference type="GO" id="GO:0008360">
    <property type="term" value="P:regulation of cell shape"/>
    <property type="evidence" value="ECO:0007669"/>
    <property type="project" value="UniProtKB-KW"/>
</dbReference>
<dbReference type="FunFam" id="3.40.50.1860:FF:000002">
    <property type="entry name" value="Glutamate racemase"/>
    <property type="match status" value="1"/>
</dbReference>
<dbReference type="Gene3D" id="3.40.50.1860">
    <property type="match status" value="2"/>
</dbReference>
<dbReference type="HAMAP" id="MF_00258">
    <property type="entry name" value="Glu_racemase"/>
    <property type="match status" value="1"/>
</dbReference>
<dbReference type="InterPro" id="IPR015942">
    <property type="entry name" value="Asp/Glu/hydantoin_racemase"/>
</dbReference>
<dbReference type="InterPro" id="IPR001920">
    <property type="entry name" value="Asp/Glu_race"/>
</dbReference>
<dbReference type="InterPro" id="IPR018187">
    <property type="entry name" value="Asp/Glu_racemase_AS_1"/>
</dbReference>
<dbReference type="InterPro" id="IPR033134">
    <property type="entry name" value="Asp/Glu_racemase_AS_2"/>
</dbReference>
<dbReference type="InterPro" id="IPR004391">
    <property type="entry name" value="Glu_race"/>
</dbReference>
<dbReference type="NCBIfam" id="TIGR00067">
    <property type="entry name" value="glut_race"/>
    <property type="match status" value="1"/>
</dbReference>
<dbReference type="NCBIfam" id="NF002035">
    <property type="entry name" value="PRK00865.1-3"/>
    <property type="match status" value="1"/>
</dbReference>
<dbReference type="PANTHER" id="PTHR21198">
    <property type="entry name" value="GLUTAMATE RACEMASE"/>
    <property type="match status" value="1"/>
</dbReference>
<dbReference type="PANTHER" id="PTHR21198:SF2">
    <property type="entry name" value="GLUTAMATE RACEMASE"/>
    <property type="match status" value="1"/>
</dbReference>
<dbReference type="Pfam" id="PF01177">
    <property type="entry name" value="Asp_Glu_race"/>
    <property type="match status" value="1"/>
</dbReference>
<dbReference type="SUPFAM" id="SSF53681">
    <property type="entry name" value="Aspartate/glutamate racemase"/>
    <property type="match status" value="2"/>
</dbReference>
<dbReference type="PROSITE" id="PS00923">
    <property type="entry name" value="ASP_GLU_RACEMASE_1"/>
    <property type="match status" value="1"/>
</dbReference>
<dbReference type="PROSITE" id="PS00924">
    <property type="entry name" value="ASP_GLU_RACEMASE_2"/>
    <property type="match status" value="1"/>
</dbReference>